<feature type="chain" id="PRO_0000414527" description="Release factor glutamine methyltransferase">
    <location>
        <begin position="1"/>
        <end position="270"/>
    </location>
</feature>
<feature type="binding site" evidence="1">
    <location>
        <begin position="113"/>
        <end position="117"/>
    </location>
    <ligand>
        <name>S-adenosyl-L-methionine</name>
        <dbReference type="ChEBI" id="CHEBI:59789"/>
    </ligand>
</feature>
<feature type="binding site" evidence="1">
    <location>
        <position position="136"/>
    </location>
    <ligand>
        <name>S-adenosyl-L-methionine</name>
        <dbReference type="ChEBI" id="CHEBI:59789"/>
    </ligand>
</feature>
<feature type="binding site" evidence="1">
    <location>
        <begin position="177"/>
        <end position="180"/>
    </location>
    <ligand>
        <name>substrate</name>
    </ligand>
</feature>
<feature type="binding site" evidence="1">
    <location>
        <position position="177"/>
    </location>
    <ligand>
        <name>S-adenosyl-L-methionine</name>
        <dbReference type="ChEBI" id="CHEBI:59789"/>
    </ligand>
</feature>
<keyword id="KW-0489">Methyltransferase</keyword>
<keyword id="KW-1185">Reference proteome</keyword>
<keyword id="KW-0949">S-adenosyl-L-methionine</keyword>
<keyword id="KW-0808">Transferase</keyword>
<name>PRMC_LACLA</name>
<reference key="1">
    <citation type="journal article" date="2001" name="Genome Res.">
        <title>The complete genome sequence of the lactic acid bacterium Lactococcus lactis ssp. lactis IL1403.</title>
        <authorList>
            <person name="Bolotin A."/>
            <person name="Wincker P."/>
            <person name="Mauger S."/>
            <person name="Jaillon O."/>
            <person name="Malarme K."/>
            <person name="Weissenbach J."/>
            <person name="Ehrlich S.D."/>
            <person name="Sorokin A."/>
        </authorList>
    </citation>
    <scope>NUCLEOTIDE SEQUENCE [LARGE SCALE GENOMIC DNA]</scope>
    <source>
        <strain>IL1403</strain>
    </source>
</reference>
<evidence type="ECO:0000255" key="1">
    <source>
        <dbReference type="HAMAP-Rule" id="MF_02126"/>
    </source>
</evidence>
<organism>
    <name type="scientific">Lactococcus lactis subsp. lactis (strain IL1403)</name>
    <name type="common">Streptococcus lactis</name>
    <dbReference type="NCBI Taxonomy" id="272623"/>
    <lineage>
        <taxon>Bacteria</taxon>
        <taxon>Bacillati</taxon>
        <taxon>Bacillota</taxon>
        <taxon>Bacilli</taxon>
        <taxon>Lactobacillales</taxon>
        <taxon>Streptococcaceae</taxon>
        <taxon>Lactococcus</taxon>
    </lineage>
</organism>
<accession>Q9CHX0</accession>
<sequence>MLWIEAVRTLSADLEDPFELEFVWRNLHELNKLSWLNLMREKITDQELKLLTEVSKRLHQNEPPQYIVGWAEFRDLKLKVDERVLIPRPETEELVEMILAENEKDSLKILDIGTGSGAIAISLAQARENWSVKASDISKEALTLAAENAEINQANLEFIQSDVLDKITDSFDIIVSNPPYIAFDETYEMDNSVIKYEPDLALFAENQGLAIYQKIADQAVNHLTDNGKIYLEIGYKQGQAVQAIFQEKFTDKLVSIHQDIFGKDRMISVK</sequence>
<comment type="function">
    <text evidence="1">Methylates the class 1 translation termination release factors RF1/PrfA and RF2/PrfB on the glutamine residue of the universally conserved GGQ motif.</text>
</comment>
<comment type="catalytic activity">
    <reaction evidence="1">
        <text>L-glutaminyl-[peptide chain release factor] + S-adenosyl-L-methionine = N(5)-methyl-L-glutaminyl-[peptide chain release factor] + S-adenosyl-L-homocysteine + H(+)</text>
        <dbReference type="Rhea" id="RHEA:42896"/>
        <dbReference type="Rhea" id="RHEA-COMP:10271"/>
        <dbReference type="Rhea" id="RHEA-COMP:10272"/>
        <dbReference type="ChEBI" id="CHEBI:15378"/>
        <dbReference type="ChEBI" id="CHEBI:30011"/>
        <dbReference type="ChEBI" id="CHEBI:57856"/>
        <dbReference type="ChEBI" id="CHEBI:59789"/>
        <dbReference type="ChEBI" id="CHEBI:61891"/>
        <dbReference type="EC" id="2.1.1.297"/>
    </reaction>
</comment>
<comment type="similarity">
    <text evidence="1">Belongs to the protein N5-glutamine methyltransferase family. PrmC subfamily.</text>
</comment>
<dbReference type="EC" id="2.1.1.297" evidence="1"/>
<dbReference type="EMBL" id="AE005176">
    <property type="protein sequence ID" value="AAK04696.1"/>
    <property type="molecule type" value="Genomic_DNA"/>
</dbReference>
<dbReference type="PIR" id="F86699">
    <property type="entry name" value="F86699"/>
</dbReference>
<dbReference type="RefSeq" id="NP_266754.1">
    <property type="nucleotide sequence ID" value="NC_002662.1"/>
</dbReference>
<dbReference type="RefSeq" id="WP_010905456.1">
    <property type="nucleotide sequence ID" value="NC_002662.1"/>
</dbReference>
<dbReference type="SMR" id="Q9CHX0"/>
<dbReference type="PaxDb" id="272623-L188472"/>
<dbReference type="EnsemblBacteria" id="AAK04696">
    <property type="protein sequence ID" value="AAK04696"/>
    <property type="gene ID" value="L188472"/>
</dbReference>
<dbReference type="KEGG" id="lla:L188472"/>
<dbReference type="PATRIC" id="fig|272623.7.peg.638"/>
<dbReference type="eggNOG" id="COG2890">
    <property type="taxonomic scope" value="Bacteria"/>
</dbReference>
<dbReference type="HOGENOM" id="CLU_018398_3_2_9"/>
<dbReference type="OrthoDB" id="9800643at2"/>
<dbReference type="Proteomes" id="UP000002196">
    <property type="component" value="Chromosome"/>
</dbReference>
<dbReference type="GO" id="GO:0003676">
    <property type="term" value="F:nucleic acid binding"/>
    <property type="evidence" value="ECO:0007669"/>
    <property type="project" value="InterPro"/>
</dbReference>
<dbReference type="GO" id="GO:0102559">
    <property type="term" value="F:protein-(glutamine-N5) methyltransferase activity"/>
    <property type="evidence" value="ECO:0007669"/>
    <property type="project" value="UniProtKB-EC"/>
</dbReference>
<dbReference type="GO" id="GO:0036009">
    <property type="term" value="F:protein-glutamine N-methyltransferase activity"/>
    <property type="evidence" value="ECO:0007669"/>
    <property type="project" value="UniProtKB-UniRule"/>
</dbReference>
<dbReference type="GO" id="GO:0032259">
    <property type="term" value="P:methylation"/>
    <property type="evidence" value="ECO:0007669"/>
    <property type="project" value="UniProtKB-KW"/>
</dbReference>
<dbReference type="CDD" id="cd02440">
    <property type="entry name" value="AdoMet_MTases"/>
    <property type="match status" value="1"/>
</dbReference>
<dbReference type="Gene3D" id="1.10.8.10">
    <property type="entry name" value="DNA helicase RuvA subunit, C-terminal domain"/>
    <property type="match status" value="1"/>
</dbReference>
<dbReference type="Gene3D" id="3.40.50.150">
    <property type="entry name" value="Vaccinia Virus protein VP39"/>
    <property type="match status" value="1"/>
</dbReference>
<dbReference type="HAMAP" id="MF_02126">
    <property type="entry name" value="RF_methyltr_PrmC"/>
    <property type="match status" value="1"/>
</dbReference>
<dbReference type="InterPro" id="IPR002052">
    <property type="entry name" value="DNA_methylase_N6_adenine_CS"/>
</dbReference>
<dbReference type="InterPro" id="IPR004556">
    <property type="entry name" value="HemK-like"/>
</dbReference>
<dbReference type="InterPro" id="IPR050320">
    <property type="entry name" value="N5-glutamine_MTase"/>
</dbReference>
<dbReference type="InterPro" id="IPR040758">
    <property type="entry name" value="PrmC_N"/>
</dbReference>
<dbReference type="InterPro" id="IPR019874">
    <property type="entry name" value="RF_methyltr_PrmC"/>
</dbReference>
<dbReference type="InterPro" id="IPR029063">
    <property type="entry name" value="SAM-dependent_MTases_sf"/>
</dbReference>
<dbReference type="InterPro" id="IPR007848">
    <property type="entry name" value="Small_mtfrase_dom"/>
</dbReference>
<dbReference type="NCBIfam" id="TIGR00536">
    <property type="entry name" value="hemK_fam"/>
    <property type="match status" value="1"/>
</dbReference>
<dbReference type="NCBIfam" id="TIGR03534">
    <property type="entry name" value="RF_mod_PrmC"/>
    <property type="match status" value="1"/>
</dbReference>
<dbReference type="PANTHER" id="PTHR18895">
    <property type="entry name" value="HEMK METHYLTRANSFERASE"/>
    <property type="match status" value="1"/>
</dbReference>
<dbReference type="PANTHER" id="PTHR18895:SF74">
    <property type="entry name" value="MTRF1L RELEASE FACTOR GLUTAMINE METHYLTRANSFERASE"/>
    <property type="match status" value="1"/>
</dbReference>
<dbReference type="Pfam" id="PF05175">
    <property type="entry name" value="MTS"/>
    <property type="match status" value="1"/>
</dbReference>
<dbReference type="Pfam" id="PF17827">
    <property type="entry name" value="PrmC_N"/>
    <property type="match status" value="1"/>
</dbReference>
<dbReference type="SUPFAM" id="SSF53335">
    <property type="entry name" value="S-adenosyl-L-methionine-dependent methyltransferases"/>
    <property type="match status" value="1"/>
</dbReference>
<protein>
    <recommendedName>
        <fullName evidence="1">Release factor glutamine methyltransferase</fullName>
        <shortName evidence="1">RF MTase</shortName>
        <ecNumber evidence="1">2.1.1.297</ecNumber>
    </recommendedName>
    <alternativeName>
        <fullName evidence="1">N5-glutamine methyltransferase PrmC</fullName>
    </alternativeName>
    <alternativeName>
        <fullName evidence="1">Protein-(glutamine-N5) MTase PrmC</fullName>
    </alternativeName>
    <alternativeName>
        <fullName evidence="1">Protein-glutamine N-methyltransferase PrmC</fullName>
    </alternativeName>
</protein>
<proteinExistence type="inferred from homology"/>
<gene>
    <name evidence="1" type="primary">prmC</name>
    <name type="synonym">hemK</name>
    <name type="ordered locus">LL0598</name>
    <name type="ORF">L188472</name>
</gene>